<protein>
    <recommendedName>
        <fullName evidence="1">1-(5-phosphoribosyl)-5-[(5-phosphoribosylamino)methylideneamino] imidazole-4-carboxamide isomerase</fullName>
        <ecNumber evidence="1">5.3.1.16</ecNumber>
    </recommendedName>
    <alternativeName>
        <fullName evidence="1">Phosphoribosylformimino-5-aminoimidazole carboxamide ribotide isomerase</fullName>
    </alternativeName>
</protein>
<dbReference type="EC" id="5.3.1.16" evidence="1"/>
<dbReference type="EMBL" id="CP001138">
    <property type="protein sequence ID" value="ACH50663.1"/>
    <property type="molecule type" value="Genomic_DNA"/>
</dbReference>
<dbReference type="RefSeq" id="WP_000586404.1">
    <property type="nucleotide sequence ID" value="NC_011149.1"/>
</dbReference>
<dbReference type="SMR" id="B5EX43"/>
<dbReference type="KEGG" id="sea:SeAg_B2201"/>
<dbReference type="HOGENOM" id="CLU_048577_1_2_6"/>
<dbReference type="UniPathway" id="UPA00031">
    <property type="reaction ID" value="UER00009"/>
</dbReference>
<dbReference type="Proteomes" id="UP000008819">
    <property type="component" value="Chromosome"/>
</dbReference>
<dbReference type="GO" id="GO:0005737">
    <property type="term" value="C:cytoplasm"/>
    <property type="evidence" value="ECO:0007669"/>
    <property type="project" value="UniProtKB-SubCell"/>
</dbReference>
<dbReference type="GO" id="GO:0003949">
    <property type="term" value="F:1-(5-phosphoribosyl)-5-[(5-phosphoribosylamino)methylideneamino]imidazole-4-carboxamide isomerase activity"/>
    <property type="evidence" value="ECO:0007669"/>
    <property type="project" value="UniProtKB-UniRule"/>
</dbReference>
<dbReference type="GO" id="GO:0000105">
    <property type="term" value="P:L-histidine biosynthetic process"/>
    <property type="evidence" value="ECO:0007669"/>
    <property type="project" value="UniProtKB-UniRule"/>
</dbReference>
<dbReference type="GO" id="GO:0000162">
    <property type="term" value="P:L-tryptophan biosynthetic process"/>
    <property type="evidence" value="ECO:0007669"/>
    <property type="project" value="TreeGrafter"/>
</dbReference>
<dbReference type="CDD" id="cd04732">
    <property type="entry name" value="HisA"/>
    <property type="match status" value="1"/>
</dbReference>
<dbReference type="FunFam" id="3.20.20.70:FF:000009">
    <property type="entry name" value="1-(5-phosphoribosyl)-5-[(5-phosphoribosylamino)methylideneamino] imidazole-4-carboxamide isomerase"/>
    <property type="match status" value="1"/>
</dbReference>
<dbReference type="Gene3D" id="3.20.20.70">
    <property type="entry name" value="Aldolase class I"/>
    <property type="match status" value="1"/>
</dbReference>
<dbReference type="HAMAP" id="MF_01014">
    <property type="entry name" value="HisA"/>
    <property type="match status" value="1"/>
</dbReference>
<dbReference type="InterPro" id="IPR013785">
    <property type="entry name" value="Aldolase_TIM"/>
</dbReference>
<dbReference type="InterPro" id="IPR006062">
    <property type="entry name" value="His_biosynth"/>
</dbReference>
<dbReference type="InterPro" id="IPR006063">
    <property type="entry name" value="HisA_bact_arch"/>
</dbReference>
<dbReference type="InterPro" id="IPR044524">
    <property type="entry name" value="Isoase_HisA-like"/>
</dbReference>
<dbReference type="InterPro" id="IPR023016">
    <property type="entry name" value="Isoase_HisA-like_bact"/>
</dbReference>
<dbReference type="InterPro" id="IPR011060">
    <property type="entry name" value="RibuloseP-bd_barrel"/>
</dbReference>
<dbReference type="NCBIfam" id="TIGR00007">
    <property type="entry name" value="1-(5-phosphoribosyl)-5-[(5-phosphoribosylamino)methylideneamino]imidazole-4-carboxamide isomerase"/>
    <property type="match status" value="1"/>
</dbReference>
<dbReference type="PANTHER" id="PTHR43090">
    <property type="entry name" value="1-(5-PHOSPHORIBOSYL)-5-[(5-PHOSPHORIBOSYLAMINO)METHYLIDENEAMINO] IMIDAZOLE-4-CARBOXAMIDE ISOMERASE"/>
    <property type="match status" value="1"/>
</dbReference>
<dbReference type="PANTHER" id="PTHR43090:SF2">
    <property type="entry name" value="1-(5-PHOSPHORIBOSYL)-5-[(5-PHOSPHORIBOSYLAMINO)METHYLIDENEAMINO] IMIDAZOLE-4-CARBOXAMIDE ISOMERASE"/>
    <property type="match status" value="1"/>
</dbReference>
<dbReference type="Pfam" id="PF00977">
    <property type="entry name" value="His_biosynth"/>
    <property type="match status" value="1"/>
</dbReference>
<dbReference type="SUPFAM" id="SSF51366">
    <property type="entry name" value="Ribulose-phoshate binding barrel"/>
    <property type="match status" value="1"/>
</dbReference>
<name>HIS4_SALA4</name>
<accession>B5EX43</accession>
<comment type="catalytic activity">
    <reaction evidence="1">
        <text>1-(5-phospho-beta-D-ribosyl)-5-[(5-phospho-beta-D-ribosylamino)methylideneamino]imidazole-4-carboxamide = 5-[(5-phospho-1-deoxy-D-ribulos-1-ylimino)methylamino]-1-(5-phospho-beta-D-ribosyl)imidazole-4-carboxamide</text>
        <dbReference type="Rhea" id="RHEA:15469"/>
        <dbReference type="ChEBI" id="CHEBI:58435"/>
        <dbReference type="ChEBI" id="CHEBI:58525"/>
        <dbReference type="EC" id="5.3.1.16"/>
    </reaction>
</comment>
<comment type="pathway">
    <text evidence="1">Amino-acid biosynthesis; L-histidine biosynthesis; L-histidine from 5-phospho-alpha-D-ribose 1-diphosphate: step 4/9.</text>
</comment>
<comment type="subcellular location">
    <subcellularLocation>
        <location evidence="1">Cytoplasm</location>
    </subcellularLocation>
</comment>
<comment type="similarity">
    <text evidence="1">Belongs to the HisA/HisF family.</text>
</comment>
<gene>
    <name evidence="1" type="primary">hisA</name>
    <name type="ordered locus">SeAg_B2201</name>
</gene>
<organism>
    <name type="scientific">Salmonella agona (strain SL483)</name>
    <dbReference type="NCBI Taxonomy" id="454166"/>
    <lineage>
        <taxon>Bacteria</taxon>
        <taxon>Pseudomonadati</taxon>
        <taxon>Pseudomonadota</taxon>
        <taxon>Gammaproteobacteria</taxon>
        <taxon>Enterobacterales</taxon>
        <taxon>Enterobacteriaceae</taxon>
        <taxon>Salmonella</taxon>
    </lineage>
</organism>
<sequence>MIIPALDLIDGTVVRLHQGDYARQRDYGNDPLPRLQDYAAQGAGVLHLVDLTGAKDPAKRQIPLIKTLVAGVNVPVQVGGGVRTEEDVAALLKAGVARVVIGSTAVKSPDVVKGWFERFGAQALVLALDVRIDEHGNKQVAVSGWQENSGVSLEQLVETYLPVGLKHVLCTDISRDGTLAGSNVSLYEEICARYPQIAFQSSGGIGDIGDIAALRGTGVRGVIVGRALLEGKFTVKEAIQCWQNV</sequence>
<evidence type="ECO:0000255" key="1">
    <source>
        <dbReference type="HAMAP-Rule" id="MF_01014"/>
    </source>
</evidence>
<feature type="chain" id="PRO_1000190549" description="1-(5-phosphoribosyl)-5-[(5-phosphoribosylamino)methylideneamino] imidazole-4-carboxamide isomerase">
    <location>
        <begin position="1"/>
        <end position="245"/>
    </location>
</feature>
<feature type="active site" description="Proton acceptor" evidence="1">
    <location>
        <position position="7"/>
    </location>
</feature>
<feature type="active site" description="Proton donor" evidence="1">
    <location>
        <position position="129"/>
    </location>
</feature>
<proteinExistence type="inferred from homology"/>
<keyword id="KW-0028">Amino-acid biosynthesis</keyword>
<keyword id="KW-0963">Cytoplasm</keyword>
<keyword id="KW-0368">Histidine biosynthesis</keyword>
<keyword id="KW-0413">Isomerase</keyword>
<reference key="1">
    <citation type="journal article" date="2011" name="J. Bacteriol.">
        <title>Comparative genomics of 28 Salmonella enterica isolates: evidence for CRISPR-mediated adaptive sublineage evolution.</title>
        <authorList>
            <person name="Fricke W.F."/>
            <person name="Mammel M.K."/>
            <person name="McDermott P.F."/>
            <person name="Tartera C."/>
            <person name="White D.G."/>
            <person name="Leclerc J.E."/>
            <person name="Ravel J."/>
            <person name="Cebula T.A."/>
        </authorList>
    </citation>
    <scope>NUCLEOTIDE SEQUENCE [LARGE SCALE GENOMIC DNA]</scope>
    <source>
        <strain>SL483</strain>
    </source>
</reference>